<keyword id="KW-0067">ATP-binding</keyword>
<keyword id="KW-0227">DNA damage</keyword>
<keyword id="KW-0233">DNA recombination</keyword>
<keyword id="KW-0238">DNA-binding</keyword>
<keyword id="KW-0547">Nucleotide-binding</keyword>
<comment type="function">
    <text evidence="1">Involved in DNA repair and in homologous recombination. May regulate the cleavage reactions of the branch-structured DNA. Has a very weak ATPase activity that is not stimulated by DNA. Binds DNA but does not promote DNA strands exchange.</text>
</comment>
<comment type="similarity">
    <text evidence="1">Belongs to the eukaryotic RecA-like protein family. RadB subfamily.</text>
</comment>
<accession>A5UKT8</accession>
<organism>
    <name type="scientific">Methanobrevibacter smithii (strain ATCC 35061 / DSM 861 / OCM 144 / PS)</name>
    <dbReference type="NCBI Taxonomy" id="420247"/>
    <lineage>
        <taxon>Archaea</taxon>
        <taxon>Methanobacteriati</taxon>
        <taxon>Methanobacteriota</taxon>
        <taxon>Methanomada group</taxon>
        <taxon>Methanobacteria</taxon>
        <taxon>Methanobacteriales</taxon>
        <taxon>Methanobacteriaceae</taxon>
        <taxon>Methanobrevibacter</taxon>
    </lineage>
</organism>
<reference key="1">
    <citation type="journal article" date="2007" name="Proc. Natl. Acad. Sci. U.S.A.">
        <title>Genomic and metabolic adaptations of Methanobrevibacter smithii to the human gut.</title>
        <authorList>
            <person name="Samuel B.S."/>
            <person name="Hansen E.E."/>
            <person name="Manchester J.K."/>
            <person name="Coutinho P.M."/>
            <person name="Henrissat B."/>
            <person name="Fulton R."/>
            <person name="Latreille P."/>
            <person name="Kim K."/>
            <person name="Wilson R.K."/>
            <person name="Gordon J.I."/>
        </authorList>
    </citation>
    <scope>NUCLEOTIDE SEQUENCE [LARGE SCALE GENOMIC DNA]</scope>
    <source>
        <strain>ATCC 35061 / DSM 861 / OCM 144 / PS</strain>
    </source>
</reference>
<feature type="chain" id="PRO_1000006935" description="DNA repair and recombination protein RadB">
    <location>
        <begin position="1"/>
        <end position="234"/>
    </location>
</feature>
<proteinExistence type="inferred from homology"/>
<name>RADB_METS3</name>
<sequence length="234" mass="26068">MKVLANFEDNHKIPTNSGIDNLLDGGVEKGTVTQIFGPPGSGKSNISLVLAVNVAKQGKKVVYVDTEGGISINRIKQIAGEDFPKIVNNIIVFEPTSFLEQNENLKTIELWIRKHHDDVDLCVLDSAVALYRVDDMKSSRLNKELGKQMGILAKIARNYDVAVVLTNQIYSSFDDDNKDVVKAVGGTILQYWSKTIIQLERNDEFNKRVATLKRHRSIGEGKQATFKIVERGII</sequence>
<evidence type="ECO:0000255" key="1">
    <source>
        <dbReference type="HAMAP-Rule" id="MF_00350"/>
    </source>
</evidence>
<dbReference type="EMBL" id="CP000678">
    <property type="protein sequence ID" value="ABQ86816.1"/>
    <property type="molecule type" value="Genomic_DNA"/>
</dbReference>
<dbReference type="RefSeq" id="WP_004036542.1">
    <property type="nucleotide sequence ID" value="NZ_CP117965.1"/>
</dbReference>
<dbReference type="SMR" id="A5UKT8"/>
<dbReference type="STRING" id="420247.Msm_0611"/>
<dbReference type="EnsemblBacteria" id="ABQ86816">
    <property type="protein sequence ID" value="ABQ86816"/>
    <property type="gene ID" value="Msm_0611"/>
</dbReference>
<dbReference type="GeneID" id="78817238"/>
<dbReference type="KEGG" id="msi:Msm_0611"/>
<dbReference type="PATRIC" id="fig|420247.28.peg.608"/>
<dbReference type="eggNOG" id="arCOG00417">
    <property type="taxonomic scope" value="Archaea"/>
</dbReference>
<dbReference type="HOGENOM" id="CLU_041732_2_0_2"/>
<dbReference type="Proteomes" id="UP000001992">
    <property type="component" value="Chromosome"/>
</dbReference>
<dbReference type="GO" id="GO:0005524">
    <property type="term" value="F:ATP binding"/>
    <property type="evidence" value="ECO:0007669"/>
    <property type="project" value="UniProtKB-UniRule"/>
</dbReference>
<dbReference type="GO" id="GO:0016887">
    <property type="term" value="F:ATP hydrolysis activity"/>
    <property type="evidence" value="ECO:0007669"/>
    <property type="project" value="InterPro"/>
</dbReference>
<dbReference type="GO" id="GO:0140664">
    <property type="term" value="F:ATP-dependent DNA damage sensor activity"/>
    <property type="evidence" value="ECO:0007669"/>
    <property type="project" value="InterPro"/>
</dbReference>
<dbReference type="GO" id="GO:0003684">
    <property type="term" value="F:damaged DNA binding"/>
    <property type="evidence" value="ECO:0007669"/>
    <property type="project" value="UniProtKB-UniRule"/>
</dbReference>
<dbReference type="GO" id="GO:0006310">
    <property type="term" value="P:DNA recombination"/>
    <property type="evidence" value="ECO:0007669"/>
    <property type="project" value="UniProtKB-UniRule"/>
</dbReference>
<dbReference type="GO" id="GO:0006281">
    <property type="term" value="P:DNA repair"/>
    <property type="evidence" value="ECO:0007669"/>
    <property type="project" value="UniProtKB-UniRule"/>
</dbReference>
<dbReference type="CDD" id="cd01394">
    <property type="entry name" value="archRadB"/>
    <property type="match status" value="1"/>
</dbReference>
<dbReference type="Gene3D" id="3.40.50.300">
    <property type="entry name" value="P-loop containing nucleotide triphosphate hydrolases"/>
    <property type="match status" value="1"/>
</dbReference>
<dbReference type="HAMAP" id="MF_00350">
    <property type="entry name" value="RadB"/>
    <property type="match status" value="1"/>
</dbReference>
<dbReference type="InterPro" id="IPR003593">
    <property type="entry name" value="AAA+_ATPase"/>
</dbReference>
<dbReference type="InterPro" id="IPR013632">
    <property type="entry name" value="DNA_recomb/repair_Rad51_C"/>
</dbReference>
<dbReference type="InterPro" id="IPR011939">
    <property type="entry name" value="DNA_repair_and_recomb_RadB"/>
</dbReference>
<dbReference type="InterPro" id="IPR027417">
    <property type="entry name" value="P-loop_NTPase"/>
</dbReference>
<dbReference type="InterPro" id="IPR020588">
    <property type="entry name" value="RecA_ATP-bd"/>
</dbReference>
<dbReference type="NCBIfam" id="TIGR02237">
    <property type="entry name" value="recomb_radB"/>
    <property type="match status" value="1"/>
</dbReference>
<dbReference type="PANTHER" id="PTHR22942:SF47">
    <property type="entry name" value="DNA REPAIR AND RECOMBINATION PROTEIN RADB"/>
    <property type="match status" value="1"/>
</dbReference>
<dbReference type="PANTHER" id="PTHR22942">
    <property type="entry name" value="RECA/RAD51/RADA DNA STRAND-PAIRING FAMILY MEMBER"/>
    <property type="match status" value="1"/>
</dbReference>
<dbReference type="Pfam" id="PF08423">
    <property type="entry name" value="Rad51"/>
    <property type="match status" value="1"/>
</dbReference>
<dbReference type="PIRSF" id="PIRSF003336">
    <property type="entry name" value="RadB"/>
    <property type="match status" value="1"/>
</dbReference>
<dbReference type="PRINTS" id="PR01874">
    <property type="entry name" value="DNAREPAIRADA"/>
</dbReference>
<dbReference type="SMART" id="SM00382">
    <property type="entry name" value="AAA"/>
    <property type="match status" value="1"/>
</dbReference>
<dbReference type="SUPFAM" id="SSF52540">
    <property type="entry name" value="P-loop containing nucleoside triphosphate hydrolases"/>
    <property type="match status" value="1"/>
</dbReference>
<dbReference type="PROSITE" id="PS50162">
    <property type="entry name" value="RECA_2"/>
    <property type="match status" value="1"/>
</dbReference>
<gene>
    <name evidence="1" type="primary">radB</name>
    <name type="ordered locus">Msm_0611</name>
</gene>
<protein>
    <recommendedName>
        <fullName evidence="1">DNA repair and recombination protein RadB</fullName>
    </recommendedName>
</protein>